<feature type="signal peptide" evidence="2">
    <location>
        <begin position="1"/>
        <end position="19"/>
    </location>
</feature>
<feature type="chain" id="PRO_0000393490" description="Probable alpha-glucuronidase A">
    <location>
        <begin position="20"/>
        <end position="841"/>
    </location>
</feature>
<feature type="glycosylation site" description="N-linked (GlcNAc...) asparagine" evidence="2">
    <location>
        <position position="50"/>
    </location>
</feature>
<feature type="glycosylation site" description="N-linked (GlcNAc...) asparagine" evidence="2">
    <location>
        <position position="104"/>
    </location>
</feature>
<feature type="glycosylation site" description="N-linked (GlcNAc...) asparagine" evidence="2">
    <location>
        <position position="223"/>
    </location>
</feature>
<feature type="glycosylation site" description="N-linked (GlcNAc...) asparagine" evidence="2">
    <location>
        <position position="280"/>
    </location>
</feature>
<feature type="glycosylation site" description="N-linked (GlcNAc...) asparagine" evidence="2">
    <location>
        <position position="311"/>
    </location>
</feature>
<feature type="glycosylation site" description="N-linked (GlcNAc...) asparagine" evidence="2">
    <location>
        <position position="344"/>
    </location>
</feature>
<feature type="glycosylation site" description="N-linked (GlcNAc...) asparagine" evidence="2">
    <location>
        <position position="466"/>
    </location>
</feature>
<feature type="glycosylation site" description="N-linked (GlcNAc...) asparagine" evidence="2">
    <location>
        <position position="528"/>
    </location>
</feature>
<feature type="glycosylation site" description="N-linked (GlcNAc...) asparagine" evidence="2">
    <location>
        <position position="577"/>
    </location>
</feature>
<feature type="glycosylation site" description="N-linked (GlcNAc...) asparagine" evidence="2">
    <location>
        <position position="683"/>
    </location>
</feature>
<feature type="glycosylation site" description="N-linked (GlcNAc...) asparagine" evidence="2">
    <location>
        <position position="724"/>
    </location>
</feature>
<feature type="glycosylation site" description="N-linked (GlcNAc...) asparagine" evidence="2">
    <location>
        <position position="733"/>
    </location>
</feature>
<organism>
    <name type="scientific">Aspergillus terreus (strain NIH 2624 / FGSC A1156)</name>
    <dbReference type="NCBI Taxonomy" id="341663"/>
    <lineage>
        <taxon>Eukaryota</taxon>
        <taxon>Fungi</taxon>
        <taxon>Dikarya</taxon>
        <taxon>Ascomycota</taxon>
        <taxon>Pezizomycotina</taxon>
        <taxon>Eurotiomycetes</taxon>
        <taxon>Eurotiomycetidae</taxon>
        <taxon>Eurotiales</taxon>
        <taxon>Aspergillaceae</taxon>
        <taxon>Aspergillus</taxon>
        <taxon>Aspergillus subgen. Circumdati</taxon>
    </lineage>
</organism>
<gene>
    <name type="primary">aguA</name>
    <name type="ORF">ATEG_06085</name>
</gene>
<sequence length="841" mass="93769">MLRLPLVLVWSLWASLTVAENGLNGWLRYAPIPCDGRCHKALPSRIVALNSTQGSPLETAIEELQTGVRGMTGKRLSVAKENNCNLHATALIATVEEYRRTCRNSSDIPDLDVDGFWLRTEGNNVQILGQSERGALYGAFEYLSMLAQGDFSSVDYSTSPHAPVRWVNQWDNMDGSIERGYAGPSIFFAQGQIVPDLSRAKQYARLLASVRINGIIVNNVNANATLLTPQNMDGLARIANVFRPYGIRIGIALNFASPDTLGGLGTYDPLDPSVISWWGNITDSLYERIPDMAGYLVKASSEGQPGPDTYNRTLADGANLFARALKPHGGVMMFRAFVYDHHINESIWTNDRANAQVDFFKKLDGQFEDNVIVQIKYGPIDFQVREPVSPLFANLYHTNTAIELQVTQEYLGQQCHLVYLPPLWKTITDFDLRVDHSPSVVRDIISGERFNRPLGGWAAVVNVGTNDTWLGSHLSMSNLYAYGRMAWSPTDDSVEILQDWIRLTFGRDQHVLDTITDMSMASWPAYENYTGNLGIQTLTDILYTHYGPNPASQDGNGWGQWTRADHDSIGMDRTVKNGTGNAGQYPAEIAEIYEDIDKTPDDLLLWFHHVPYTHRLDSGKTVIQHFYDAHYAGAETAQGFVPQWESLRGRIDPERYDAMRTRLVYQAGHSIVWRDAINNFYWNLSGIADTNGRVGHHPWRVEAESMQLQGYQPYAVSPFETASNYTAVVTTSNSTTGTASTTLDFPSGTYDVGVNYFDMYGGKSRWSLYLNDKVVGKWEGNSEDVLGHTPSIYLDGHSAIRITFNGVKVRKGDRLKIVGVPDGVEPAPLDYVVFLPQGVID</sequence>
<accession>Q0CJP9</accession>
<comment type="function">
    <text evidence="1">Alpha-glucuronidase involved in the hydrolysis of xylan, a major structural heterogeneous polysaccharide found in plant biomass representing the second most abundant polysaccharide in the biosphere, after cellulose. Releases 4-O-methylglucuronic acid from xylan (By similarity).</text>
</comment>
<comment type="catalytic activity">
    <reaction>
        <text>an alpha-D-glucuronoside + H2O = D-glucuronate + an alcohol</text>
        <dbReference type="Rhea" id="RHEA:20005"/>
        <dbReference type="ChEBI" id="CHEBI:15377"/>
        <dbReference type="ChEBI" id="CHEBI:30879"/>
        <dbReference type="ChEBI" id="CHEBI:58720"/>
        <dbReference type="ChEBI" id="CHEBI:58899"/>
        <dbReference type="EC" id="3.2.1.139"/>
    </reaction>
</comment>
<comment type="subcellular location">
    <subcellularLocation>
        <location evidence="1">Secreted</location>
    </subcellularLocation>
</comment>
<comment type="similarity">
    <text evidence="3">Belongs to the glycosyl hydrolase 67 family.</text>
</comment>
<evidence type="ECO:0000250" key="1"/>
<evidence type="ECO:0000255" key="2"/>
<evidence type="ECO:0000305" key="3"/>
<dbReference type="EC" id="3.2.1.139"/>
<dbReference type="EMBL" id="CH476601">
    <property type="protein sequence ID" value="EAU33846.1"/>
    <property type="molecule type" value="Genomic_DNA"/>
</dbReference>
<dbReference type="RefSeq" id="XP_001215263.1">
    <property type="nucleotide sequence ID" value="XM_001215263.1"/>
</dbReference>
<dbReference type="SMR" id="Q0CJP9"/>
<dbReference type="STRING" id="341663.Q0CJP9"/>
<dbReference type="GlyCosmos" id="Q0CJP9">
    <property type="glycosylation" value="12 sites, No reported glycans"/>
</dbReference>
<dbReference type="EnsemblFungi" id="EAU33846">
    <property type="protein sequence ID" value="EAU33846"/>
    <property type="gene ID" value="ATEG_06085"/>
</dbReference>
<dbReference type="GeneID" id="4321653"/>
<dbReference type="VEuPathDB" id="FungiDB:ATEG_06085"/>
<dbReference type="eggNOG" id="ENOG502QWS4">
    <property type="taxonomic scope" value="Eukaryota"/>
</dbReference>
<dbReference type="HOGENOM" id="CLU_007125_2_0_1"/>
<dbReference type="OMA" id="IWRAFVY"/>
<dbReference type="OrthoDB" id="6501611at2759"/>
<dbReference type="Proteomes" id="UP000007963">
    <property type="component" value="Unassembled WGS sequence"/>
</dbReference>
<dbReference type="GO" id="GO:0005576">
    <property type="term" value="C:extracellular region"/>
    <property type="evidence" value="ECO:0007669"/>
    <property type="project" value="UniProtKB-SubCell"/>
</dbReference>
<dbReference type="GO" id="GO:0046559">
    <property type="term" value="F:alpha-glucuronidase activity"/>
    <property type="evidence" value="ECO:0007669"/>
    <property type="project" value="UniProtKB-EC"/>
</dbReference>
<dbReference type="GO" id="GO:0045493">
    <property type="term" value="P:xylan catabolic process"/>
    <property type="evidence" value="ECO:0007669"/>
    <property type="project" value="UniProtKB-KW"/>
</dbReference>
<dbReference type="CDD" id="cd02795">
    <property type="entry name" value="CBM6-CBM35-CBM36_like"/>
    <property type="match status" value="1"/>
</dbReference>
<dbReference type="FunFam" id="3.20.20.80:FF:000096">
    <property type="entry name" value="Xylan alpha-1,2-glucuronidase"/>
    <property type="match status" value="1"/>
</dbReference>
<dbReference type="FunFam" id="3.90.1330.10:FF:000001">
    <property type="entry name" value="Xylan alpha-1,2-glucuronidase"/>
    <property type="match status" value="1"/>
</dbReference>
<dbReference type="Gene3D" id="3.90.1330.10">
    <property type="entry name" value="Alpha-glucuronidase, C-terminal domain"/>
    <property type="match status" value="1"/>
</dbReference>
<dbReference type="Gene3D" id="3.30.379.10">
    <property type="entry name" value="Chitobiase/beta-hexosaminidase domain 2-like"/>
    <property type="match status" value="1"/>
</dbReference>
<dbReference type="Gene3D" id="3.20.20.80">
    <property type="entry name" value="Glycosidases"/>
    <property type="match status" value="1"/>
</dbReference>
<dbReference type="InterPro" id="IPR037054">
    <property type="entry name" value="A-glucoronidase_C_sf"/>
</dbReference>
<dbReference type="InterPro" id="IPR011395">
    <property type="entry name" value="Glyco_hydro_67_aGlcAse"/>
</dbReference>
<dbReference type="InterPro" id="IPR005154">
    <property type="entry name" value="Glyco_hydro_67_aGlcAse_N"/>
</dbReference>
<dbReference type="InterPro" id="IPR011099">
    <property type="entry name" value="Glyco_hydro_67_C"/>
</dbReference>
<dbReference type="InterPro" id="IPR011100">
    <property type="entry name" value="Glyco_hydro_67_cat"/>
</dbReference>
<dbReference type="InterPro" id="IPR017853">
    <property type="entry name" value="Glycoside_hydrolase_SF"/>
</dbReference>
<dbReference type="InterPro" id="IPR029018">
    <property type="entry name" value="Hex-like_dom2"/>
</dbReference>
<dbReference type="PANTHER" id="PTHR39207">
    <property type="entry name" value="ALPHA-GLUCURONIDASE A"/>
    <property type="match status" value="1"/>
</dbReference>
<dbReference type="PANTHER" id="PTHR39207:SF1">
    <property type="entry name" value="ALPHA-GLUCURONIDASE A"/>
    <property type="match status" value="1"/>
</dbReference>
<dbReference type="Pfam" id="PF07477">
    <property type="entry name" value="Glyco_hydro_67C"/>
    <property type="match status" value="1"/>
</dbReference>
<dbReference type="Pfam" id="PF07488">
    <property type="entry name" value="Glyco_hydro_67M"/>
    <property type="match status" value="1"/>
</dbReference>
<dbReference type="Pfam" id="PF03648">
    <property type="entry name" value="Glyco_hydro_67N"/>
    <property type="match status" value="1"/>
</dbReference>
<dbReference type="PIRSF" id="PIRSF029900">
    <property type="entry name" value="Alpha-glucuronds"/>
    <property type="match status" value="1"/>
</dbReference>
<dbReference type="SUPFAM" id="SSF51445">
    <property type="entry name" value="(Trans)glycosidases"/>
    <property type="match status" value="1"/>
</dbReference>
<dbReference type="SUPFAM" id="SSF55545">
    <property type="entry name" value="beta-N-acetylhexosaminidase-like domain"/>
    <property type="match status" value="1"/>
</dbReference>
<name>AGUA_ASPTN</name>
<reference key="1">
    <citation type="submission" date="2005-09" db="EMBL/GenBank/DDBJ databases">
        <title>Annotation of the Aspergillus terreus NIH2624 genome.</title>
        <authorList>
            <person name="Birren B.W."/>
            <person name="Lander E.S."/>
            <person name="Galagan J.E."/>
            <person name="Nusbaum C."/>
            <person name="Devon K."/>
            <person name="Henn M."/>
            <person name="Ma L.-J."/>
            <person name="Jaffe D.B."/>
            <person name="Butler J."/>
            <person name="Alvarez P."/>
            <person name="Gnerre S."/>
            <person name="Grabherr M."/>
            <person name="Kleber M."/>
            <person name="Mauceli E.W."/>
            <person name="Brockman W."/>
            <person name="Rounsley S."/>
            <person name="Young S.K."/>
            <person name="LaButti K."/>
            <person name="Pushparaj V."/>
            <person name="DeCaprio D."/>
            <person name="Crawford M."/>
            <person name="Koehrsen M."/>
            <person name="Engels R."/>
            <person name="Montgomery P."/>
            <person name="Pearson M."/>
            <person name="Howarth C."/>
            <person name="Larson L."/>
            <person name="Luoma S."/>
            <person name="White J."/>
            <person name="Alvarado L."/>
            <person name="Kodira C.D."/>
            <person name="Zeng Q."/>
            <person name="Oleary S."/>
            <person name="Yandava C."/>
            <person name="Denning D.W."/>
            <person name="Nierman W.C."/>
            <person name="Milne T."/>
            <person name="Madden K."/>
        </authorList>
    </citation>
    <scope>NUCLEOTIDE SEQUENCE [LARGE SCALE GENOMIC DNA]</scope>
    <source>
        <strain>NIH 2624 / FGSC A1156</strain>
    </source>
</reference>
<protein>
    <recommendedName>
        <fullName>Probable alpha-glucuronidase A</fullName>
        <ecNumber>3.2.1.139</ecNumber>
    </recommendedName>
    <alternativeName>
        <fullName>Alpha-glucosiduronase A</fullName>
    </alternativeName>
</protein>
<keyword id="KW-0119">Carbohydrate metabolism</keyword>
<keyword id="KW-0325">Glycoprotein</keyword>
<keyword id="KW-0326">Glycosidase</keyword>
<keyword id="KW-0378">Hydrolase</keyword>
<keyword id="KW-0624">Polysaccharide degradation</keyword>
<keyword id="KW-1185">Reference proteome</keyword>
<keyword id="KW-0964">Secreted</keyword>
<keyword id="KW-0732">Signal</keyword>
<keyword id="KW-0858">Xylan degradation</keyword>
<proteinExistence type="inferred from homology"/>